<proteinExistence type="inferred from homology"/>
<comment type="subcellular location">
    <subcellularLocation>
        <location evidence="1">Cell inner membrane</location>
        <topology evidence="1">Multi-pass membrane protein</topology>
    </subcellularLocation>
</comment>
<comment type="similarity">
    <text evidence="1">Belongs to the UPF0283 family.</text>
</comment>
<gene>
    <name type="ordered locus">YpsIP31758_1791</name>
</gene>
<protein>
    <recommendedName>
        <fullName evidence="1">UPF0283 membrane protein YpsIP31758_1791</fullName>
    </recommendedName>
</protein>
<accession>A7FHN8</accession>
<dbReference type="EMBL" id="CP000720">
    <property type="protein sequence ID" value="ABS49024.1"/>
    <property type="molecule type" value="Genomic_DNA"/>
</dbReference>
<dbReference type="RefSeq" id="WP_012105044.1">
    <property type="nucleotide sequence ID" value="NC_009708.1"/>
</dbReference>
<dbReference type="KEGG" id="ypi:YpsIP31758_1791"/>
<dbReference type="HOGENOM" id="CLU_057693_2_0_6"/>
<dbReference type="Proteomes" id="UP000002412">
    <property type="component" value="Chromosome"/>
</dbReference>
<dbReference type="GO" id="GO:0005886">
    <property type="term" value="C:plasma membrane"/>
    <property type="evidence" value="ECO:0007669"/>
    <property type="project" value="UniProtKB-SubCell"/>
</dbReference>
<dbReference type="HAMAP" id="MF_01085">
    <property type="entry name" value="UPF0283"/>
    <property type="match status" value="1"/>
</dbReference>
<dbReference type="InterPro" id="IPR021147">
    <property type="entry name" value="DUF697"/>
</dbReference>
<dbReference type="InterPro" id="IPR006507">
    <property type="entry name" value="UPF0283"/>
</dbReference>
<dbReference type="NCBIfam" id="TIGR01620">
    <property type="entry name" value="hyp_HI0043"/>
    <property type="match status" value="1"/>
</dbReference>
<dbReference type="PANTHER" id="PTHR39342">
    <property type="entry name" value="UPF0283 MEMBRANE PROTEIN YCJF"/>
    <property type="match status" value="1"/>
</dbReference>
<dbReference type="PANTHER" id="PTHR39342:SF1">
    <property type="entry name" value="UPF0283 MEMBRANE PROTEIN YCJF"/>
    <property type="match status" value="1"/>
</dbReference>
<dbReference type="Pfam" id="PF05128">
    <property type="entry name" value="DUF697"/>
    <property type="match status" value="1"/>
</dbReference>
<name>Y1791_YERP3</name>
<reference key="1">
    <citation type="journal article" date="2007" name="PLoS Genet.">
        <title>The complete genome sequence of Yersinia pseudotuberculosis IP31758, the causative agent of Far East scarlet-like fever.</title>
        <authorList>
            <person name="Eppinger M."/>
            <person name="Rosovitz M.J."/>
            <person name="Fricke W.F."/>
            <person name="Rasko D.A."/>
            <person name="Kokorina G."/>
            <person name="Fayolle C."/>
            <person name="Lindler L.E."/>
            <person name="Carniel E."/>
            <person name="Ravel J."/>
        </authorList>
    </citation>
    <scope>NUCLEOTIDE SEQUENCE [LARGE SCALE GENOMIC DNA]</scope>
    <source>
        <strain>IP 31758</strain>
    </source>
</reference>
<evidence type="ECO:0000255" key="1">
    <source>
        <dbReference type="HAMAP-Rule" id="MF_01085"/>
    </source>
</evidence>
<feature type="chain" id="PRO_1000064857" description="UPF0283 membrane protein YpsIP31758_1791">
    <location>
        <begin position="1"/>
        <end position="353"/>
    </location>
</feature>
<feature type="transmembrane region" description="Helical" evidence="1">
    <location>
        <begin position="71"/>
        <end position="91"/>
    </location>
</feature>
<feature type="transmembrane region" description="Helical" evidence="1">
    <location>
        <begin position="101"/>
        <end position="121"/>
    </location>
</feature>
<feature type="transmembrane region" description="Helical" evidence="1">
    <location>
        <begin position="214"/>
        <end position="234"/>
    </location>
</feature>
<organism>
    <name type="scientific">Yersinia pseudotuberculosis serotype O:1b (strain IP 31758)</name>
    <dbReference type="NCBI Taxonomy" id="349747"/>
    <lineage>
        <taxon>Bacteria</taxon>
        <taxon>Pseudomonadati</taxon>
        <taxon>Pseudomonadota</taxon>
        <taxon>Gammaproteobacteria</taxon>
        <taxon>Enterobacterales</taxon>
        <taxon>Yersiniaceae</taxon>
        <taxon>Yersinia</taxon>
    </lineage>
</organism>
<sequence length="353" mass="39295">MSEPLKPRIDFEQPLQSLDEPVLKSAQAFDEQAAEKFYPAAQELDAEDEEGRVEGLVNAALKPKRSLWRKMVTAGMVILGASVIAQSVQWVNQAWQQQDWIALGATTAGGLIILAGVGSVVTEWRRLYHLRQRAEERDIARALLVSHGVGQGRVFCEKLARQAGLDQGHPALQRWQASLHETHNDREVVELYAKLVQPALDNQARAEISRYAAESALMIAVSPLALVDMAFIAWRNIRLINRIAALYGIELGYFSRIRLFRLVLLNIAFAGASELVREVGMDWLSQDLAARLSARAAQGIGAGLLTARLGIKAMELCRPLPWLEGDKPKLGDFRRQLMNQLKNTLPKKDKTAH</sequence>
<keyword id="KW-0997">Cell inner membrane</keyword>
<keyword id="KW-1003">Cell membrane</keyword>
<keyword id="KW-0472">Membrane</keyword>
<keyword id="KW-0812">Transmembrane</keyword>
<keyword id="KW-1133">Transmembrane helix</keyword>